<feature type="chain" id="PRO_1000126932" description="Large ribosomal subunit protein bL9">
    <location>
        <begin position="1"/>
        <end position="148"/>
    </location>
</feature>
<accession>B0SB37</accession>
<protein>
    <recommendedName>
        <fullName evidence="1">Large ribosomal subunit protein bL9</fullName>
    </recommendedName>
    <alternativeName>
        <fullName evidence="2">50S ribosomal protein L9</fullName>
    </alternativeName>
</protein>
<dbReference type="EMBL" id="CP000777">
    <property type="protein sequence ID" value="ABZ94543.1"/>
    <property type="molecule type" value="Genomic_DNA"/>
</dbReference>
<dbReference type="RefSeq" id="WP_012389069.1">
    <property type="nucleotide sequence ID" value="NC_010842.1"/>
</dbReference>
<dbReference type="SMR" id="B0SB37"/>
<dbReference type="KEGG" id="lbf:LBF_2043"/>
<dbReference type="HOGENOM" id="CLU_078938_3_0_12"/>
<dbReference type="GO" id="GO:1990904">
    <property type="term" value="C:ribonucleoprotein complex"/>
    <property type="evidence" value="ECO:0007669"/>
    <property type="project" value="UniProtKB-KW"/>
</dbReference>
<dbReference type="GO" id="GO:0005840">
    <property type="term" value="C:ribosome"/>
    <property type="evidence" value="ECO:0007669"/>
    <property type="project" value="UniProtKB-KW"/>
</dbReference>
<dbReference type="GO" id="GO:0019843">
    <property type="term" value="F:rRNA binding"/>
    <property type="evidence" value="ECO:0007669"/>
    <property type="project" value="UniProtKB-UniRule"/>
</dbReference>
<dbReference type="GO" id="GO:0003735">
    <property type="term" value="F:structural constituent of ribosome"/>
    <property type="evidence" value="ECO:0007669"/>
    <property type="project" value="InterPro"/>
</dbReference>
<dbReference type="GO" id="GO:0006412">
    <property type="term" value="P:translation"/>
    <property type="evidence" value="ECO:0007669"/>
    <property type="project" value="UniProtKB-UniRule"/>
</dbReference>
<dbReference type="FunFam" id="3.40.5.10:FF:000008">
    <property type="entry name" value="50S ribosomal protein L9"/>
    <property type="match status" value="1"/>
</dbReference>
<dbReference type="Gene3D" id="3.10.430.100">
    <property type="entry name" value="Ribosomal protein L9, C-terminal domain"/>
    <property type="match status" value="1"/>
</dbReference>
<dbReference type="Gene3D" id="3.40.5.10">
    <property type="entry name" value="Ribosomal protein L9, N-terminal domain"/>
    <property type="match status" value="1"/>
</dbReference>
<dbReference type="HAMAP" id="MF_00503">
    <property type="entry name" value="Ribosomal_bL9"/>
    <property type="match status" value="1"/>
</dbReference>
<dbReference type="InterPro" id="IPR000244">
    <property type="entry name" value="Ribosomal_bL9"/>
</dbReference>
<dbReference type="InterPro" id="IPR009027">
    <property type="entry name" value="Ribosomal_bL9/RNase_H1_N"/>
</dbReference>
<dbReference type="InterPro" id="IPR020594">
    <property type="entry name" value="Ribosomal_bL9_bac/chp"/>
</dbReference>
<dbReference type="InterPro" id="IPR020069">
    <property type="entry name" value="Ribosomal_bL9_C"/>
</dbReference>
<dbReference type="InterPro" id="IPR036791">
    <property type="entry name" value="Ribosomal_bL9_C_sf"/>
</dbReference>
<dbReference type="InterPro" id="IPR020070">
    <property type="entry name" value="Ribosomal_bL9_N"/>
</dbReference>
<dbReference type="InterPro" id="IPR036935">
    <property type="entry name" value="Ribosomal_bL9_N_sf"/>
</dbReference>
<dbReference type="NCBIfam" id="TIGR00158">
    <property type="entry name" value="L9"/>
    <property type="match status" value="1"/>
</dbReference>
<dbReference type="PANTHER" id="PTHR21368">
    <property type="entry name" value="50S RIBOSOMAL PROTEIN L9"/>
    <property type="match status" value="1"/>
</dbReference>
<dbReference type="Pfam" id="PF03948">
    <property type="entry name" value="Ribosomal_L9_C"/>
    <property type="match status" value="1"/>
</dbReference>
<dbReference type="Pfam" id="PF01281">
    <property type="entry name" value="Ribosomal_L9_N"/>
    <property type="match status" value="1"/>
</dbReference>
<dbReference type="SUPFAM" id="SSF55658">
    <property type="entry name" value="L9 N-domain-like"/>
    <property type="match status" value="1"/>
</dbReference>
<dbReference type="SUPFAM" id="SSF55653">
    <property type="entry name" value="Ribosomal protein L9 C-domain"/>
    <property type="match status" value="1"/>
</dbReference>
<dbReference type="PROSITE" id="PS00651">
    <property type="entry name" value="RIBOSOMAL_L9"/>
    <property type="match status" value="1"/>
</dbReference>
<sequence length="148" mass="16146">MKVVLQKDVLNLGDAGDVKEVADGYARNFLIPRRLAVRANDGNTKAAIHQKRLAELKRDKRVKVMKELSASIDGKTYEIKVKVGENDKLFGSVTANDIALAIKNTGVELDKRKLDLGEPIKSVGEFKIKVRLAEGVVPGIIVKVVGQA</sequence>
<organism>
    <name type="scientific">Leptospira biflexa serovar Patoc (strain Patoc 1 / Ames)</name>
    <dbReference type="NCBI Taxonomy" id="355278"/>
    <lineage>
        <taxon>Bacteria</taxon>
        <taxon>Pseudomonadati</taxon>
        <taxon>Spirochaetota</taxon>
        <taxon>Spirochaetia</taxon>
        <taxon>Leptospirales</taxon>
        <taxon>Leptospiraceae</taxon>
        <taxon>Leptospira</taxon>
    </lineage>
</organism>
<keyword id="KW-0687">Ribonucleoprotein</keyword>
<keyword id="KW-0689">Ribosomal protein</keyword>
<keyword id="KW-0694">RNA-binding</keyword>
<keyword id="KW-0699">rRNA-binding</keyword>
<evidence type="ECO:0000255" key="1">
    <source>
        <dbReference type="HAMAP-Rule" id="MF_00503"/>
    </source>
</evidence>
<evidence type="ECO:0000305" key="2"/>
<gene>
    <name evidence="1" type="primary">rplI</name>
    <name type="ordered locus">LBF_2043</name>
</gene>
<name>RL9_LEPBA</name>
<proteinExistence type="inferred from homology"/>
<reference key="1">
    <citation type="journal article" date="2008" name="PLoS ONE">
        <title>Genome sequence of the saprophyte Leptospira biflexa provides insights into the evolution of Leptospira and the pathogenesis of leptospirosis.</title>
        <authorList>
            <person name="Picardeau M."/>
            <person name="Bulach D.M."/>
            <person name="Bouchier C."/>
            <person name="Zuerner R.L."/>
            <person name="Zidane N."/>
            <person name="Wilson P.J."/>
            <person name="Creno S."/>
            <person name="Kuczek E.S."/>
            <person name="Bommezzadri S."/>
            <person name="Davis J.C."/>
            <person name="McGrath A."/>
            <person name="Johnson M.J."/>
            <person name="Boursaux-Eude C."/>
            <person name="Seemann T."/>
            <person name="Rouy Z."/>
            <person name="Coppel R.L."/>
            <person name="Rood J.I."/>
            <person name="Lajus A."/>
            <person name="Davies J.K."/>
            <person name="Medigue C."/>
            <person name="Adler B."/>
        </authorList>
    </citation>
    <scope>NUCLEOTIDE SEQUENCE [LARGE SCALE GENOMIC DNA]</scope>
    <source>
        <strain>Patoc 1 / Ames</strain>
    </source>
</reference>
<comment type="function">
    <text evidence="1">Binds to the 23S rRNA.</text>
</comment>
<comment type="similarity">
    <text evidence="1">Belongs to the bacterial ribosomal protein bL9 family.</text>
</comment>